<evidence type="ECO:0000255" key="1">
    <source>
        <dbReference type="HAMAP-Rule" id="MF_00658"/>
    </source>
</evidence>
<feature type="chain" id="PRO_0000366630" description="Ribosomal RNA large subunit methyltransferase H">
    <location>
        <begin position="1"/>
        <end position="160"/>
    </location>
</feature>
<feature type="binding site" evidence="1">
    <location>
        <position position="77"/>
    </location>
    <ligand>
        <name>S-adenosyl-L-methionine</name>
        <dbReference type="ChEBI" id="CHEBI:59789"/>
    </ligand>
</feature>
<feature type="binding site" evidence="1">
    <location>
        <position position="109"/>
    </location>
    <ligand>
        <name>S-adenosyl-L-methionine</name>
        <dbReference type="ChEBI" id="CHEBI:59789"/>
    </ligand>
</feature>
<feature type="binding site" evidence="1">
    <location>
        <begin position="128"/>
        <end position="133"/>
    </location>
    <ligand>
        <name>S-adenosyl-L-methionine</name>
        <dbReference type="ChEBI" id="CHEBI:59789"/>
    </ligand>
</feature>
<accession>Q04HG9</accession>
<sequence>MLNIRILVVGKIKEKYFRNALDQYLKRLSRFTKIEIIEVKDEATPEKASKSENLEILQTEGGRLLDKINNRDFVIALAIEGKLITSPDLADMIREIPLDGYSTIDFVIGGSLGLSNEIKNRANAKISFGRITLPHQLARVLLTEQIYRSFMINEGSPYHK</sequence>
<reference key="1">
    <citation type="journal article" date="2006" name="Proc. Natl. Acad. Sci. U.S.A.">
        <title>Comparative genomics of the lactic acid bacteria.</title>
        <authorList>
            <person name="Makarova K.S."/>
            <person name="Slesarev A."/>
            <person name="Wolf Y.I."/>
            <person name="Sorokin A."/>
            <person name="Mirkin B."/>
            <person name="Koonin E.V."/>
            <person name="Pavlov A."/>
            <person name="Pavlova N."/>
            <person name="Karamychev V."/>
            <person name="Polouchine N."/>
            <person name="Shakhova V."/>
            <person name="Grigoriev I."/>
            <person name="Lou Y."/>
            <person name="Rohksar D."/>
            <person name="Lucas S."/>
            <person name="Huang K."/>
            <person name="Goodstein D.M."/>
            <person name="Hawkins T."/>
            <person name="Plengvidhya V."/>
            <person name="Welker D."/>
            <person name="Hughes J."/>
            <person name="Goh Y."/>
            <person name="Benson A."/>
            <person name="Baldwin K."/>
            <person name="Lee J.-H."/>
            <person name="Diaz-Muniz I."/>
            <person name="Dosti B."/>
            <person name="Smeianov V."/>
            <person name="Wechter W."/>
            <person name="Barabote R."/>
            <person name="Lorca G."/>
            <person name="Altermann E."/>
            <person name="Barrangou R."/>
            <person name="Ganesan B."/>
            <person name="Xie Y."/>
            <person name="Rawsthorne H."/>
            <person name="Tamir D."/>
            <person name="Parker C."/>
            <person name="Breidt F."/>
            <person name="Broadbent J.R."/>
            <person name="Hutkins R."/>
            <person name="O'Sullivan D."/>
            <person name="Steele J."/>
            <person name="Unlu G."/>
            <person name="Saier M.H. Jr."/>
            <person name="Klaenhammer T."/>
            <person name="Richardson P."/>
            <person name="Kozyavkin S."/>
            <person name="Weimer B.C."/>
            <person name="Mills D.A."/>
        </authorList>
    </citation>
    <scope>NUCLEOTIDE SEQUENCE [LARGE SCALE GENOMIC DNA]</scope>
    <source>
        <strain>ATCC BAA-331 / PSU-1</strain>
    </source>
</reference>
<dbReference type="EC" id="2.1.1.177" evidence="1"/>
<dbReference type="EMBL" id="CP000411">
    <property type="protein sequence ID" value="ABJ56103.1"/>
    <property type="molecule type" value="Genomic_DNA"/>
</dbReference>
<dbReference type="RefSeq" id="WP_002818020.1">
    <property type="nucleotide sequence ID" value="NC_008528.1"/>
</dbReference>
<dbReference type="SMR" id="Q04HG9"/>
<dbReference type="STRING" id="203123.OEOE_0108"/>
<dbReference type="GeneID" id="75064935"/>
<dbReference type="KEGG" id="ooe:OEOE_0108"/>
<dbReference type="eggNOG" id="COG1576">
    <property type="taxonomic scope" value="Bacteria"/>
</dbReference>
<dbReference type="HOGENOM" id="CLU_100552_0_0_9"/>
<dbReference type="Proteomes" id="UP000000774">
    <property type="component" value="Chromosome"/>
</dbReference>
<dbReference type="GO" id="GO:0005737">
    <property type="term" value="C:cytoplasm"/>
    <property type="evidence" value="ECO:0007669"/>
    <property type="project" value="UniProtKB-SubCell"/>
</dbReference>
<dbReference type="GO" id="GO:0070038">
    <property type="term" value="F:rRNA (pseudouridine-N3-)-methyltransferase activity"/>
    <property type="evidence" value="ECO:0007669"/>
    <property type="project" value="UniProtKB-UniRule"/>
</dbReference>
<dbReference type="CDD" id="cd18081">
    <property type="entry name" value="RlmH-like"/>
    <property type="match status" value="1"/>
</dbReference>
<dbReference type="Gene3D" id="3.40.1280.10">
    <property type="match status" value="1"/>
</dbReference>
<dbReference type="HAMAP" id="MF_00658">
    <property type="entry name" value="23SrRNA_methyltr_H"/>
    <property type="match status" value="1"/>
</dbReference>
<dbReference type="InterPro" id="IPR029028">
    <property type="entry name" value="Alpha/beta_knot_MTases"/>
</dbReference>
<dbReference type="InterPro" id="IPR003742">
    <property type="entry name" value="RlmH-like"/>
</dbReference>
<dbReference type="InterPro" id="IPR029026">
    <property type="entry name" value="tRNA_m1G_MTases_N"/>
</dbReference>
<dbReference type="NCBIfam" id="NF000985">
    <property type="entry name" value="PRK00103.1-3"/>
    <property type="match status" value="1"/>
</dbReference>
<dbReference type="NCBIfam" id="TIGR00246">
    <property type="entry name" value="tRNA_RlmH_YbeA"/>
    <property type="match status" value="1"/>
</dbReference>
<dbReference type="PANTHER" id="PTHR33603">
    <property type="entry name" value="METHYLTRANSFERASE"/>
    <property type="match status" value="1"/>
</dbReference>
<dbReference type="PANTHER" id="PTHR33603:SF1">
    <property type="entry name" value="RIBOSOMAL RNA LARGE SUBUNIT METHYLTRANSFERASE H"/>
    <property type="match status" value="1"/>
</dbReference>
<dbReference type="Pfam" id="PF02590">
    <property type="entry name" value="SPOUT_MTase"/>
    <property type="match status" value="1"/>
</dbReference>
<dbReference type="PIRSF" id="PIRSF004505">
    <property type="entry name" value="MT_bac"/>
    <property type="match status" value="1"/>
</dbReference>
<dbReference type="SUPFAM" id="SSF75217">
    <property type="entry name" value="alpha/beta knot"/>
    <property type="match status" value="1"/>
</dbReference>
<proteinExistence type="inferred from homology"/>
<keyword id="KW-0963">Cytoplasm</keyword>
<keyword id="KW-0489">Methyltransferase</keyword>
<keyword id="KW-1185">Reference proteome</keyword>
<keyword id="KW-0698">rRNA processing</keyword>
<keyword id="KW-0949">S-adenosyl-L-methionine</keyword>
<keyword id="KW-0808">Transferase</keyword>
<organism>
    <name type="scientific">Oenococcus oeni (strain ATCC BAA-331 / PSU-1)</name>
    <dbReference type="NCBI Taxonomy" id="203123"/>
    <lineage>
        <taxon>Bacteria</taxon>
        <taxon>Bacillati</taxon>
        <taxon>Bacillota</taxon>
        <taxon>Bacilli</taxon>
        <taxon>Lactobacillales</taxon>
        <taxon>Lactobacillaceae</taxon>
        <taxon>Oenococcus</taxon>
    </lineage>
</organism>
<gene>
    <name evidence="1" type="primary">rlmH</name>
    <name type="ordered locus">OEOE_0108</name>
</gene>
<name>RLMH_OENOB</name>
<protein>
    <recommendedName>
        <fullName evidence="1">Ribosomal RNA large subunit methyltransferase H</fullName>
        <ecNumber evidence="1">2.1.1.177</ecNumber>
    </recommendedName>
    <alternativeName>
        <fullName evidence="1">23S rRNA (pseudouridine1915-N3)-methyltransferase</fullName>
    </alternativeName>
    <alternativeName>
        <fullName evidence="1">23S rRNA m3Psi1915 methyltransferase</fullName>
    </alternativeName>
    <alternativeName>
        <fullName evidence="1">rRNA (pseudouridine-N3-)-methyltransferase RlmH</fullName>
    </alternativeName>
</protein>
<comment type="function">
    <text evidence="1">Specifically methylates the pseudouridine at position 1915 (m3Psi1915) in 23S rRNA.</text>
</comment>
<comment type="catalytic activity">
    <reaction evidence="1">
        <text>pseudouridine(1915) in 23S rRNA + S-adenosyl-L-methionine = N(3)-methylpseudouridine(1915) in 23S rRNA + S-adenosyl-L-homocysteine + H(+)</text>
        <dbReference type="Rhea" id="RHEA:42752"/>
        <dbReference type="Rhea" id="RHEA-COMP:10221"/>
        <dbReference type="Rhea" id="RHEA-COMP:10222"/>
        <dbReference type="ChEBI" id="CHEBI:15378"/>
        <dbReference type="ChEBI" id="CHEBI:57856"/>
        <dbReference type="ChEBI" id="CHEBI:59789"/>
        <dbReference type="ChEBI" id="CHEBI:65314"/>
        <dbReference type="ChEBI" id="CHEBI:74486"/>
        <dbReference type="EC" id="2.1.1.177"/>
    </reaction>
</comment>
<comment type="subunit">
    <text evidence="1">Homodimer.</text>
</comment>
<comment type="subcellular location">
    <subcellularLocation>
        <location evidence="1">Cytoplasm</location>
    </subcellularLocation>
</comment>
<comment type="similarity">
    <text evidence="1">Belongs to the RNA methyltransferase RlmH family.</text>
</comment>